<evidence type="ECO:0000255" key="1">
    <source>
        <dbReference type="HAMAP-Rule" id="MF_00031"/>
    </source>
</evidence>
<evidence type="ECO:0000305" key="2"/>
<comment type="function">
    <text evidence="1">The RuvA-RuvB-RuvC complex processes Holliday junction (HJ) DNA during genetic recombination and DNA repair, while the RuvA-RuvB complex plays an important role in the rescue of blocked DNA replication forks via replication fork reversal (RFR). RuvA specifically binds to HJ cruciform DNA, conferring on it an open structure. The RuvB hexamer acts as an ATP-dependent pump, pulling dsDNA into and through the RuvAB complex. HJ branch migration allows RuvC to scan DNA until it finds its consensus sequence, where it cleaves and resolves the cruciform DNA.</text>
</comment>
<comment type="subunit">
    <text evidence="1">Homotetramer. Forms an RuvA(8)-RuvB(12)-Holliday junction (HJ) complex. HJ DNA is sandwiched between 2 RuvA tetramers; dsDNA enters through RuvA and exits via RuvB. An RuvB hexamer assembles on each DNA strand where it exits the tetramer. Each RuvB hexamer is contacted by two RuvA subunits (via domain III) on 2 adjacent RuvB subunits; this complex drives branch migration. In the full resolvosome a probable DNA-RuvA(4)-RuvB(12)-RuvC(2) complex forms which resolves the HJ.</text>
</comment>
<comment type="subcellular location">
    <subcellularLocation>
        <location evidence="1">Cytoplasm</location>
    </subcellularLocation>
</comment>
<comment type="domain">
    <text evidence="1">Has three domains with a flexible linker between the domains II and III and assumes an 'L' shape. Domain III is highly mobile and contacts RuvB.</text>
</comment>
<comment type="similarity">
    <text evidence="1">Belongs to the RuvA family.</text>
</comment>
<comment type="sequence caution" evidence="2">
    <conflict type="erroneous initiation">
        <sequence resource="EMBL-CDS" id="CAG69373"/>
    </conflict>
    <text>Extended N-terminus.</text>
</comment>
<organism>
    <name type="scientific">Acinetobacter baylyi (strain ATCC 33305 / BD413 / ADP1)</name>
    <dbReference type="NCBI Taxonomy" id="62977"/>
    <lineage>
        <taxon>Bacteria</taxon>
        <taxon>Pseudomonadati</taxon>
        <taxon>Pseudomonadota</taxon>
        <taxon>Gammaproteobacteria</taxon>
        <taxon>Moraxellales</taxon>
        <taxon>Moraxellaceae</taxon>
        <taxon>Acinetobacter</taxon>
    </lineage>
</organism>
<accession>Q6F992</accession>
<name>RUVA_ACIAD</name>
<reference key="1">
    <citation type="journal article" date="2004" name="Nucleic Acids Res.">
        <title>Unique features revealed by the genome sequence of Acinetobacter sp. ADP1, a versatile and naturally transformation competent bacterium.</title>
        <authorList>
            <person name="Barbe V."/>
            <person name="Vallenet D."/>
            <person name="Fonknechten N."/>
            <person name="Kreimeyer A."/>
            <person name="Oztas S."/>
            <person name="Labarre L."/>
            <person name="Cruveiller S."/>
            <person name="Robert C."/>
            <person name="Duprat S."/>
            <person name="Wincker P."/>
            <person name="Ornston L.N."/>
            <person name="Weissenbach J."/>
            <person name="Marliere P."/>
            <person name="Cohen G.N."/>
            <person name="Medigue C."/>
        </authorList>
    </citation>
    <scope>NUCLEOTIDE SEQUENCE [LARGE SCALE GENOMIC DNA]</scope>
    <source>
        <strain>ATCC 33305 / BD413 / ADP1</strain>
    </source>
</reference>
<feature type="chain" id="PRO_0000224835" description="Holliday junction branch migration complex subunit RuvA">
    <location>
        <begin position="1"/>
        <end position="201"/>
    </location>
</feature>
<feature type="region of interest" description="Domain I" evidence="1">
    <location>
        <begin position="1"/>
        <end position="63"/>
    </location>
</feature>
<feature type="region of interest" description="Domain II" evidence="1">
    <location>
        <begin position="64"/>
        <end position="142"/>
    </location>
</feature>
<feature type="region of interest" description="Flexible linker" evidence="1">
    <location>
        <begin position="143"/>
        <end position="152"/>
    </location>
</feature>
<feature type="region of interest" description="Domain III" evidence="1">
    <location>
        <begin position="152"/>
        <end position="201"/>
    </location>
</feature>
<proteinExistence type="inferred from homology"/>
<dbReference type="EMBL" id="CR543861">
    <property type="protein sequence ID" value="CAG69373.1"/>
    <property type="status" value="ALT_INIT"/>
    <property type="molecule type" value="Genomic_DNA"/>
</dbReference>
<dbReference type="RefSeq" id="WP_004928811.1">
    <property type="nucleotide sequence ID" value="NC_005966.1"/>
</dbReference>
<dbReference type="SMR" id="Q6F992"/>
<dbReference type="STRING" id="202950.GCA_001485005_01406"/>
<dbReference type="GeneID" id="45234894"/>
<dbReference type="KEGG" id="aci:ACIAD2614"/>
<dbReference type="eggNOG" id="COG0632">
    <property type="taxonomic scope" value="Bacteria"/>
</dbReference>
<dbReference type="HOGENOM" id="CLU_087936_0_0_6"/>
<dbReference type="OrthoDB" id="5293449at2"/>
<dbReference type="BioCyc" id="ASP62977:ACIAD_RS11885-MONOMER"/>
<dbReference type="Proteomes" id="UP000000430">
    <property type="component" value="Chromosome"/>
</dbReference>
<dbReference type="GO" id="GO:0005737">
    <property type="term" value="C:cytoplasm"/>
    <property type="evidence" value="ECO:0007669"/>
    <property type="project" value="UniProtKB-SubCell"/>
</dbReference>
<dbReference type="GO" id="GO:0009379">
    <property type="term" value="C:Holliday junction helicase complex"/>
    <property type="evidence" value="ECO:0007669"/>
    <property type="project" value="InterPro"/>
</dbReference>
<dbReference type="GO" id="GO:0048476">
    <property type="term" value="C:Holliday junction resolvase complex"/>
    <property type="evidence" value="ECO:0007669"/>
    <property type="project" value="UniProtKB-UniRule"/>
</dbReference>
<dbReference type="GO" id="GO:0005524">
    <property type="term" value="F:ATP binding"/>
    <property type="evidence" value="ECO:0007669"/>
    <property type="project" value="InterPro"/>
</dbReference>
<dbReference type="GO" id="GO:0000400">
    <property type="term" value="F:four-way junction DNA binding"/>
    <property type="evidence" value="ECO:0007669"/>
    <property type="project" value="UniProtKB-UniRule"/>
</dbReference>
<dbReference type="GO" id="GO:0009378">
    <property type="term" value="F:four-way junction helicase activity"/>
    <property type="evidence" value="ECO:0007669"/>
    <property type="project" value="InterPro"/>
</dbReference>
<dbReference type="GO" id="GO:0006310">
    <property type="term" value="P:DNA recombination"/>
    <property type="evidence" value="ECO:0007669"/>
    <property type="project" value="UniProtKB-UniRule"/>
</dbReference>
<dbReference type="GO" id="GO:0006281">
    <property type="term" value="P:DNA repair"/>
    <property type="evidence" value="ECO:0007669"/>
    <property type="project" value="UniProtKB-UniRule"/>
</dbReference>
<dbReference type="CDD" id="cd14332">
    <property type="entry name" value="UBA_RuvA_C"/>
    <property type="match status" value="1"/>
</dbReference>
<dbReference type="Gene3D" id="1.10.150.20">
    <property type="entry name" value="5' to 3' exonuclease, C-terminal subdomain"/>
    <property type="match status" value="1"/>
</dbReference>
<dbReference type="Gene3D" id="1.10.8.10">
    <property type="entry name" value="DNA helicase RuvA subunit, C-terminal domain"/>
    <property type="match status" value="1"/>
</dbReference>
<dbReference type="Gene3D" id="2.40.50.140">
    <property type="entry name" value="Nucleic acid-binding proteins"/>
    <property type="match status" value="1"/>
</dbReference>
<dbReference type="HAMAP" id="MF_00031">
    <property type="entry name" value="DNA_HJ_migration_RuvA"/>
    <property type="match status" value="1"/>
</dbReference>
<dbReference type="InterPro" id="IPR013849">
    <property type="entry name" value="DNA_helicase_Holl-junc_RuvA_I"/>
</dbReference>
<dbReference type="InterPro" id="IPR003583">
    <property type="entry name" value="Hlx-hairpin-Hlx_DNA-bd_motif"/>
</dbReference>
<dbReference type="InterPro" id="IPR012340">
    <property type="entry name" value="NA-bd_OB-fold"/>
</dbReference>
<dbReference type="InterPro" id="IPR000085">
    <property type="entry name" value="RuvA"/>
</dbReference>
<dbReference type="InterPro" id="IPR010994">
    <property type="entry name" value="RuvA_2-like"/>
</dbReference>
<dbReference type="InterPro" id="IPR011114">
    <property type="entry name" value="RuvA_C"/>
</dbReference>
<dbReference type="InterPro" id="IPR036267">
    <property type="entry name" value="RuvA_C_sf"/>
</dbReference>
<dbReference type="NCBIfam" id="TIGR00084">
    <property type="entry name" value="ruvA"/>
    <property type="match status" value="1"/>
</dbReference>
<dbReference type="Pfam" id="PF14520">
    <property type="entry name" value="HHH_5"/>
    <property type="match status" value="1"/>
</dbReference>
<dbReference type="Pfam" id="PF07499">
    <property type="entry name" value="RuvA_C"/>
    <property type="match status" value="1"/>
</dbReference>
<dbReference type="Pfam" id="PF01330">
    <property type="entry name" value="RuvA_N"/>
    <property type="match status" value="1"/>
</dbReference>
<dbReference type="SMART" id="SM00278">
    <property type="entry name" value="HhH1"/>
    <property type="match status" value="2"/>
</dbReference>
<dbReference type="SUPFAM" id="SSF46929">
    <property type="entry name" value="DNA helicase RuvA subunit, C-terminal domain"/>
    <property type="match status" value="1"/>
</dbReference>
<dbReference type="SUPFAM" id="SSF50249">
    <property type="entry name" value="Nucleic acid-binding proteins"/>
    <property type="match status" value="1"/>
</dbReference>
<dbReference type="SUPFAM" id="SSF47781">
    <property type="entry name" value="RuvA domain 2-like"/>
    <property type="match status" value="1"/>
</dbReference>
<gene>
    <name evidence="1" type="primary">ruvA</name>
    <name type="ordered locus">ACIAD2614</name>
</gene>
<sequence length="201" mass="21898">MIGCLIGEVFALEAPTVLLNVNGVGYEIDTPLSTFCQLQKGQHVTLWTHLVVREDAQQLYGFIDAQEKLIFRTLLKVNGVGPKMALGILSTLSIELFIHTIEHDDINTLIKVPGVGRKTAERLMIELRDRFKALSVQATTGSTVTSAQIQFSSNSPIAEAEAALQSLGYKPIEAQKAIAAVKADYTEAADLIRAALKSMMK</sequence>
<keyword id="KW-0963">Cytoplasm</keyword>
<keyword id="KW-0227">DNA damage</keyword>
<keyword id="KW-0233">DNA recombination</keyword>
<keyword id="KW-0234">DNA repair</keyword>
<keyword id="KW-0238">DNA-binding</keyword>
<protein>
    <recommendedName>
        <fullName evidence="1">Holliday junction branch migration complex subunit RuvA</fullName>
    </recommendedName>
</protein>